<dbReference type="EMBL" id="X80800">
    <property type="protein sequence ID" value="CAA56779.1"/>
    <property type="molecule type" value="Genomic_DNA"/>
</dbReference>
<dbReference type="EMBL" id="CR543861">
    <property type="protein sequence ID" value="CAG69981.1"/>
    <property type="molecule type" value="Genomic_DNA"/>
</dbReference>
<dbReference type="PIR" id="A57253">
    <property type="entry name" value="A57253"/>
</dbReference>
<dbReference type="RefSeq" id="WP_004923856.1">
    <property type="nucleotide sequence ID" value="NC_005966.1"/>
</dbReference>
<dbReference type="SMR" id="Q43961"/>
<dbReference type="STRING" id="202950.GCA_001485005_02152"/>
<dbReference type="GeneID" id="45235509"/>
<dbReference type="KEGG" id="aci:ACIAD3308"/>
<dbReference type="eggNOG" id="COG5380">
    <property type="taxonomic scope" value="Bacteria"/>
</dbReference>
<dbReference type="HOGENOM" id="CLU_064928_2_0_6"/>
<dbReference type="OrthoDB" id="7025807at2"/>
<dbReference type="BioCyc" id="ASP62977:ACIAD_RS14970-MONOMER"/>
<dbReference type="Proteomes" id="UP000000430">
    <property type="component" value="Chromosome"/>
</dbReference>
<dbReference type="GO" id="GO:0005886">
    <property type="term" value="C:plasma membrane"/>
    <property type="evidence" value="ECO:0007669"/>
    <property type="project" value="UniProtKB-SubCell"/>
</dbReference>
<dbReference type="GO" id="GO:0051082">
    <property type="term" value="F:unfolded protein binding"/>
    <property type="evidence" value="ECO:0007669"/>
    <property type="project" value="UniProtKB-UniRule"/>
</dbReference>
<dbReference type="GO" id="GO:0016042">
    <property type="term" value="P:lipid catabolic process"/>
    <property type="evidence" value="ECO:0007669"/>
    <property type="project" value="UniProtKB-UniRule"/>
</dbReference>
<dbReference type="GO" id="GO:0006457">
    <property type="term" value="P:protein folding"/>
    <property type="evidence" value="ECO:0007669"/>
    <property type="project" value="UniProtKB-UniRule"/>
</dbReference>
<dbReference type="HAMAP" id="MF_00790">
    <property type="entry name" value="Lipase_chap"/>
    <property type="match status" value="1"/>
</dbReference>
<dbReference type="InterPro" id="IPR004961">
    <property type="entry name" value="Lipase_chaperone"/>
</dbReference>
<dbReference type="NCBIfam" id="NF002336">
    <property type="entry name" value="PRK01294.1-4"/>
    <property type="match status" value="1"/>
</dbReference>
<dbReference type="Pfam" id="PF03280">
    <property type="entry name" value="Lipase_chap"/>
    <property type="match status" value="1"/>
</dbReference>
<dbReference type="SUPFAM" id="SSF158855">
    <property type="entry name" value="Lipase chaperone-like"/>
    <property type="match status" value="1"/>
</dbReference>
<organism>
    <name type="scientific">Acinetobacter baylyi (strain ATCC 33305 / BD413 / ADP1)</name>
    <dbReference type="NCBI Taxonomy" id="62977"/>
    <lineage>
        <taxon>Bacteria</taxon>
        <taxon>Pseudomonadati</taxon>
        <taxon>Pseudomonadota</taxon>
        <taxon>Gammaproteobacteria</taxon>
        <taxon>Moraxellales</taxon>
        <taxon>Moraxellaceae</taxon>
        <taxon>Acinetobacter</taxon>
    </lineage>
</organism>
<sequence length="343" mass="39016">MNGSKKIYLGIGLVALLMIFIYWLMPKDTANASSQIESTNASAIIATSPGQQNQLSENTTPFGSVSQHDTQVNCQLQLNAANHLIVNEQTRNCFEYFLTQYGEKSLTQIDQDIKNYFTQSLPQPARDQAQDLWQRYLKYREELGNLKEPAIAKTDIAYYRAVFTSRQMLRQRFFSATEIAGLFGSEDIYNQYTLERMAILNNSKLSEIEKAKQLKALFDQLPQDWKANLEQLSKLDDLKQLTTSIKKNGGSAQELHDMRTNLVGHDATARLEQLDVERSNWKSNVTQYLDERQTILNSNMSDTAKQNAISALRSKNFTAPQDQIRVQAFESAKDQGQSLPFSE</sequence>
<protein>
    <recommendedName>
        <fullName>Lipase chaperone</fullName>
    </recommendedName>
    <alternativeName>
        <fullName>Lipase activator protein</fullName>
    </alternativeName>
    <alternativeName>
        <fullName>Lipase foldase</fullName>
    </alternativeName>
    <alternativeName>
        <fullName>Lipase helper protein</fullName>
    </alternativeName>
    <alternativeName>
        <fullName>Lipase modulator</fullName>
    </alternativeName>
</protein>
<comment type="function">
    <text>May be involved in the folding of the extracellular lipase during its passage through the periplasm.</text>
</comment>
<comment type="subcellular location">
    <subcellularLocation>
        <location>Cell inner membrane</location>
        <topology>Single-pass membrane protein</topology>
        <orientation>Periplasmic side</orientation>
    </subcellularLocation>
</comment>
<comment type="similarity">
    <text evidence="2">Belongs to the lipase chaperone family.</text>
</comment>
<reference key="1">
    <citation type="journal article" date="1995" name="J. Bacteriol.">
        <title>Characterization of lipase-deficient mutants of Acinetobacter calcoaceticus BD413: identification of a periplasmic lipase chaperone essential for the production of extracellular lipase.</title>
        <authorList>
            <person name="Kok R.G."/>
            <person name="Thor J.J."/>
            <person name="Nugteren-Roodzant I.M."/>
            <person name="Vosman B."/>
            <person name="Hellingwerf K.J."/>
        </authorList>
    </citation>
    <scope>NUCLEOTIDE SEQUENCE [GENOMIC DNA]</scope>
</reference>
<reference key="2">
    <citation type="journal article" date="2004" name="Nucleic Acids Res.">
        <title>Unique features revealed by the genome sequence of Acinetobacter sp. ADP1, a versatile and naturally transformation competent bacterium.</title>
        <authorList>
            <person name="Barbe V."/>
            <person name="Vallenet D."/>
            <person name="Fonknechten N."/>
            <person name="Kreimeyer A."/>
            <person name="Oztas S."/>
            <person name="Labarre L."/>
            <person name="Cruveiller S."/>
            <person name="Robert C."/>
            <person name="Duprat S."/>
            <person name="Wincker P."/>
            <person name="Ornston L.N."/>
            <person name="Weissenbach J."/>
            <person name="Marliere P."/>
            <person name="Cohen G.N."/>
            <person name="Medigue C."/>
        </authorList>
    </citation>
    <scope>NUCLEOTIDE SEQUENCE [LARGE SCALE GENOMIC DNA]</scope>
    <source>
        <strain>ATCC 33305 / BD413 / ADP1</strain>
    </source>
</reference>
<gene>
    <name type="primary">lifO</name>
    <name type="synonym">lipB</name>
    <name type="ordered locus">ACIAD3308</name>
</gene>
<name>LIFO_ACIAD</name>
<keyword id="KW-0997">Cell inner membrane</keyword>
<keyword id="KW-1003">Cell membrane</keyword>
<keyword id="KW-0143">Chaperone</keyword>
<keyword id="KW-0442">Lipid degradation</keyword>
<keyword id="KW-0443">Lipid metabolism</keyword>
<keyword id="KW-0472">Membrane</keyword>
<keyword id="KW-0812">Transmembrane</keyword>
<keyword id="KW-1133">Transmembrane helix</keyword>
<accession>Q43961</accession>
<accession>Q6F7I4</accession>
<feature type="chain" id="PRO_0000218477" description="Lipase chaperone">
    <location>
        <begin position="1"/>
        <end position="343"/>
    </location>
</feature>
<feature type="transmembrane region" description="Helical" evidence="1">
    <location>
        <begin position="7"/>
        <end position="27"/>
    </location>
</feature>
<feature type="sequence conflict" description="In Ref. 1; CAA56779." evidence="2" ref="1">
    <original>D</original>
    <variation>V</variation>
    <location>
        <position position="322"/>
    </location>
</feature>
<evidence type="ECO:0000255" key="1"/>
<evidence type="ECO:0000305" key="2"/>
<proteinExistence type="inferred from homology"/>